<sequence length="338" mass="37168">MHIAALHQPSQVQLNQDGNLKHFLTIEGLSKENLTKILDTAQSFLDDNNNLINRPLLEGRTVMNLFFENSTRTRTTFEAAAKRLSANVLNIDIARSSTSKGETLRDTLWNLEAMAADIFVVRHSSSGAAHFIAKDVCPKVAIINAGDGRHAHPTQAMLDMLTIRRETKKSFEDLSVAIIGDIKHSRVARSDVAALQTLGCKDIRVIAPNTLLPVGFSEYGDHVRLFNNMDEGITGCDVIIALRIQNERIDSPALSSQSEFYRMYGLNKERLSLAKPDCIVMHPGPMNRGVEIDSSIADGEQSVILKQVTNGIAVRMAVLALSMQGQLQEQGLIEAIAL</sequence>
<reference key="1">
    <citation type="journal article" date="2008" name="J. Bacteriol.">
        <title>Comparative genome sequence analysis of multidrug-resistant Acinetobacter baumannii.</title>
        <authorList>
            <person name="Adams M.D."/>
            <person name="Goglin K."/>
            <person name="Molyneaux N."/>
            <person name="Hujer K.M."/>
            <person name="Lavender H."/>
            <person name="Jamison J.J."/>
            <person name="MacDonald I.J."/>
            <person name="Martin K.M."/>
            <person name="Russo T."/>
            <person name="Campagnari A.A."/>
            <person name="Hujer A.M."/>
            <person name="Bonomo R.A."/>
            <person name="Gill S.R."/>
        </authorList>
    </citation>
    <scope>NUCLEOTIDE SEQUENCE [LARGE SCALE GENOMIC DNA]</scope>
    <source>
        <strain>AB307-0294</strain>
    </source>
</reference>
<protein>
    <recommendedName>
        <fullName evidence="1">Aspartate carbamoyltransferase catalytic subunit</fullName>
        <ecNumber evidence="1">2.1.3.2</ecNumber>
    </recommendedName>
    <alternativeName>
        <fullName evidence="1">Aspartate transcarbamylase</fullName>
        <shortName evidence="1">ATCase</shortName>
    </alternativeName>
</protein>
<accession>B7GWH6</accession>
<name>PYRB_ACIB3</name>
<organism>
    <name type="scientific">Acinetobacter baumannii (strain AB307-0294)</name>
    <dbReference type="NCBI Taxonomy" id="557600"/>
    <lineage>
        <taxon>Bacteria</taxon>
        <taxon>Pseudomonadati</taxon>
        <taxon>Pseudomonadota</taxon>
        <taxon>Gammaproteobacteria</taxon>
        <taxon>Moraxellales</taxon>
        <taxon>Moraxellaceae</taxon>
        <taxon>Acinetobacter</taxon>
        <taxon>Acinetobacter calcoaceticus/baumannii complex</taxon>
    </lineage>
</organism>
<evidence type="ECO:0000255" key="1">
    <source>
        <dbReference type="HAMAP-Rule" id="MF_00001"/>
    </source>
</evidence>
<dbReference type="EC" id="2.1.3.2" evidence="1"/>
<dbReference type="EMBL" id="CP001172">
    <property type="protein sequence ID" value="ACJ58549.1"/>
    <property type="molecule type" value="Genomic_DNA"/>
</dbReference>
<dbReference type="RefSeq" id="WP_000546643.1">
    <property type="nucleotide sequence ID" value="NZ_CP001172.1"/>
</dbReference>
<dbReference type="SMR" id="B7GWH6"/>
<dbReference type="HOGENOM" id="CLU_043846_2_0_6"/>
<dbReference type="UniPathway" id="UPA00070">
    <property type="reaction ID" value="UER00116"/>
</dbReference>
<dbReference type="Proteomes" id="UP000006924">
    <property type="component" value="Chromosome"/>
</dbReference>
<dbReference type="GO" id="GO:0005829">
    <property type="term" value="C:cytosol"/>
    <property type="evidence" value="ECO:0007669"/>
    <property type="project" value="TreeGrafter"/>
</dbReference>
<dbReference type="GO" id="GO:0016597">
    <property type="term" value="F:amino acid binding"/>
    <property type="evidence" value="ECO:0007669"/>
    <property type="project" value="InterPro"/>
</dbReference>
<dbReference type="GO" id="GO:0004070">
    <property type="term" value="F:aspartate carbamoyltransferase activity"/>
    <property type="evidence" value="ECO:0007669"/>
    <property type="project" value="UniProtKB-UniRule"/>
</dbReference>
<dbReference type="GO" id="GO:0006207">
    <property type="term" value="P:'de novo' pyrimidine nucleobase biosynthetic process"/>
    <property type="evidence" value="ECO:0007669"/>
    <property type="project" value="InterPro"/>
</dbReference>
<dbReference type="GO" id="GO:0044205">
    <property type="term" value="P:'de novo' UMP biosynthetic process"/>
    <property type="evidence" value="ECO:0007669"/>
    <property type="project" value="UniProtKB-UniRule"/>
</dbReference>
<dbReference type="GO" id="GO:0006520">
    <property type="term" value="P:amino acid metabolic process"/>
    <property type="evidence" value="ECO:0007669"/>
    <property type="project" value="InterPro"/>
</dbReference>
<dbReference type="FunFam" id="3.40.50.1370:FF:000007">
    <property type="entry name" value="Aspartate carbamoyltransferase"/>
    <property type="match status" value="1"/>
</dbReference>
<dbReference type="Gene3D" id="3.40.50.1370">
    <property type="entry name" value="Aspartate/ornithine carbamoyltransferase"/>
    <property type="match status" value="2"/>
</dbReference>
<dbReference type="HAMAP" id="MF_00001">
    <property type="entry name" value="Asp_carb_tr"/>
    <property type="match status" value="1"/>
</dbReference>
<dbReference type="InterPro" id="IPR006132">
    <property type="entry name" value="Asp/Orn_carbamoyltranf_P-bd"/>
</dbReference>
<dbReference type="InterPro" id="IPR006130">
    <property type="entry name" value="Asp/Orn_carbamoylTrfase"/>
</dbReference>
<dbReference type="InterPro" id="IPR036901">
    <property type="entry name" value="Asp/Orn_carbamoylTrfase_sf"/>
</dbReference>
<dbReference type="InterPro" id="IPR002082">
    <property type="entry name" value="Asp_carbamoyltransf"/>
</dbReference>
<dbReference type="InterPro" id="IPR006131">
    <property type="entry name" value="Asp_carbamoyltransf_Asp/Orn-bd"/>
</dbReference>
<dbReference type="NCBIfam" id="TIGR00670">
    <property type="entry name" value="asp_carb_tr"/>
    <property type="match status" value="1"/>
</dbReference>
<dbReference type="NCBIfam" id="NF002032">
    <property type="entry name" value="PRK00856.1"/>
    <property type="match status" value="1"/>
</dbReference>
<dbReference type="PANTHER" id="PTHR45753:SF6">
    <property type="entry name" value="ASPARTATE CARBAMOYLTRANSFERASE"/>
    <property type="match status" value="1"/>
</dbReference>
<dbReference type="PANTHER" id="PTHR45753">
    <property type="entry name" value="ORNITHINE CARBAMOYLTRANSFERASE, MITOCHONDRIAL"/>
    <property type="match status" value="1"/>
</dbReference>
<dbReference type="Pfam" id="PF00185">
    <property type="entry name" value="OTCace"/>
    <property type="match status" value="1"/>
</dbReference>
<dbReference type="Pfam" id="PF02729">
    <property type="entry name" value="OTCace_N"/>
    <property type="match status" value="1"/>
</dbReference>
<dbReference type="PRINTS" id="PR00100">
    <property type="entry name" value="AOTCASE"/>
</dbReference>
<dbReference type="PRINTS" id="PR00101">
    <property type="entry name" value="ATCASE"/>
</dbReference>
<dbReference type="SUPFAM" id="SSF53671">
    <property type="entry name" value="Aspartate/ornithine carbamoyltransferase"/>
    <property type="match status" value="1"/>
</dbReference>
<dbReference type="PROSITE" id="PS00097">
    <property type="entry name" value="CARBAMOYLTRANSFERASE"/>
    <property type="match status" value="1"/>
</dbReference>
<keyword id="KW-0665">Pyrimidine biosynthesis</keyword>
<keyword id="KW-0808">Transferase</keyword>
<gene>
    <name evidence="1" type="primary">pyrB</name>
    <name type="ordered locus">ABBFA_002386</name>
</gene>
<feature type="chain" id="PRO_1000116117" description="Aspartate carbamoyltransferase catalytic subunit">
    <location>
        <begin position="1"/>
        <end position="338"/>
    </location>
</feature>
<feature type="binding site" evidence="1">
    <location>
        <position position="72"/>
    </location>
    <ligand>
        <name>carbamoyl phosphate</name>
        <dbReference type="ChEBI" id="CHEBI:58228"/>
    </ligand>
</feature>
<feature type="binding site" evidence="1">
    <location>
        <position position="73"/>
    </location>
    <ligand>
        <name>carbamoyl phosphate</name>
        <dbReference type="ChEBI" id="CHEBI:58228"/>
    </ligand>
</feature>
<feature type="binding site" evidence="1">
    <location>
        <position position="100"/>
    </location>
    <ligand>
        <name>L-aspartate</name>
        <dbReference type="ChEBI" id="CHEBI:29991"/>
    </ligand>
</feature>
<feature type="binding site" evidence="1">
    <location>
        <position position="122"/>
    </location>
    <ligand>
        <name>carbamoyl phosphate</name>
        <dbReference type="ChEBI" id="CHEBI:58228"/>
    </ligand>
</feature>
<feature type="binding site" evidence="1">
    <location>
        <position position="152"/>
    </location>
    <ligand>
        <name>carbamoyl phosphate</name>
        <dbReference type="ChEBI" id="CHEBI:58228"/>
    </ligand>
</feature>
<feature type="binding site" evidence="1">
    <location>
        <position position="155"/>
    </location>
    <ligand>
        <name>carbamoyl phosphate</name>
        <dbReference type="ChEBI" id="CHEBI:58228"/>
    </ligand>
</feature>
<feature type="binding site" evidence="1">
    <location>
        <position position="186"/>
    </location>
    <ligand>
        <name>L-aspartate</name>
        <dbReference type="ChEBI" id="CHEBI:29991"/>
    </ligand>
</feature>
<feature type="binding site" evidence="1">
    <location>
        <position position="243"/>
    </location>
    <ligand>
        <name>L-aspartate</name>
        <dbReference type="ChEBI" id="CHEBI:29991"/>
    </ligand>
</feature>
<feature type="binding site" evidence="1">
    <location>
        <position position="284"/>
    </location>
    <ligand>
        <name>carbamoyl phosphate</name>
        <dbReference type="ChEBI" id="CHEBI:58228"/>
    </ligand>
</feature>
<feature type="binding site" evidence="1">
    <location>
        <position position="285"/>
    </location>
    <ligand>
        <name>carbamoyl phosphate</name>
        <dbReference type="ChEBI" id="CHEBI:58228"/>
    </ligand>
</feature>
<comment type="function">
    <text evidence="1">Catalyzes the condensation of carbamoyl phosphate and aspartate to form carbamoyl aspartate and inorganic phosphate, the committed step in the de novo pyrimidine nucleotide biosynthesis pathway.</text>
</comment>
<comment type="catalytic activity">
    <reaction evidence="1">
        <text>carbamoyl phosphate + L-aspartate = N-carbamoyl-L-aspartate + phosphate + H(+)</text>
        <dbReference type="Rhea" id="RHEA:20013"/>
        <dbReference type="ChEBI" id="CHEBI:15378"/>
        <dbReference type="ChEBI" id="CHEBI:29991"/>
        <dbReference type="ChEBI" id="CHEBI:32814"/>
        <dbReference type="ChEBI" id="CHEBI:43474"/>
        <dbReference type="ChEBI" id="CHEBI:58228"/>
        <dbReference type="EC" id="2.1.3.2"/>
    </reaction>
</comment>
<comment type="pathway">
    <text evidence="1">Pyrimidine metabolism; UMP biosynthesis via de novo pathway; (S)-dihydroorotate from bicarbonate: step 2/3.</text>
</comment>
<comment type="subunit">
    <text evidence="1">Heterododecamer (2C3:3R2) of six catalytic PyrB chains organized as two trimers (C3), and six regulatory PyrI chains organized as three dimers (R2).</text>
</comment>
<comment type="similarity">
    <text evidence="1">Belongs to the aspartate/ornithine carbamoyltransferase superfamily. ATCase family.</text>
</comment>
<proteinExistence type="inferred from homology"/>